<protein>
    <recommendedName>
        <fullName>Sodium-dependent phosphate transport protein 3</fullName>
    </recommendedName>
    <alternativeName>
        <fullName>Na(+)/PI cotransporter 3</fullName>
    </alternativeName>
    <alternativeName>
        <fullName>Sodium/phosphate cotransporter 3</fullName>
    </alternativeName>
    <alternativeName>
        <fullName>Solute carrier family 17 member 2</fullName>
    </alternativeName>
</protein>
<gene>
    <name type="primary">Slc17a2</name>
    <name type="synonym">Npt3</name>
</gene>
<accession>Q5SZA1</accession>
<accession>Q8VCX8</accession>
<comment type="function">
    <text evidence="2">Acts as a membrane potential-dependent organic anion transporter, the transport requires a low concentration of chloride ions (PubMed:25972451). Mediates chloride-dependent transport of urate (PubMed:25972451). Can actively transport inorganic phosphate into cells via Na(+) cotransport (PubMed:25972451).</text>
</comment>
<comment type="catalytic activity">
    <reaction evidence="2">
        <text>3 Na(+)(out) + phosphate(out) = 3 Na(+)(in) + phosphate(in)</text>
        <dbReference type="Rhea" id="RHEA:71255"/>
        <dbReference type="ChEBI" id="CHEBI:29101"/>
        <dbReference type="ChEBI" id="CHEBI:43474"/>
    </reaction>
</comment>
<comment type="catalytic activity">
    <reaction evidence="2">
        <text>urate(out) + n chloride(in) = urate(in) + n chloride(out)</text>
        <dbReference type="Rhea" id="RHEA:72319"/>
        <dbReference type="ChEBI" id="CHEBI:17775"/>
        <dbReference type="ChEBI" id="CHEBI:17996"/>
    </reaction>
</comment>
<comment type="biophysicochemical properties">
    <kinetics>
        <KM evidence="2">0.5 mM for urate</KM>
        <Vmax evidence="2">43.7 nmol/min/mg protein for urate</Vmax>
    </kinetics>
</comment>
<comment type="subcellular location">
    <subcellularLocation>
        <location evidence="2">Apical cell membrane</location>
        <topology evidence="1">Multi-pass membrane protein</topology>
    </subcellularLocation>
</comment>
<comment type="alternative products">
    <event type="alternative splicing"/>
    <isoform>
        <id>Q5SZA1-1</id>
        <name>1</name>
        <sequence type="displayed"/>
    </isoform>
    <isoform>
        <id>Q5SZA1-2</id>
        <name>2</name>
        <sequence type="described" ref="VSP_020639"/>
    </isoform>
</comment>
<comment type="tissue specificity">
    <text evidence="2">Expressed in the liver, kidney, placenta, lung and thyroid (at protein level).</text>
</comment>
<comment type="similarity">
    <text evidence="4">Belongs to the major facilitator superfamily. Sodium/anion cotransporter family.</text>
</comment>
<sequence length="478" mass="51965">MDEKPTTRKGSGFCSLRYALALIMHFSNFTMITQRVSLSIAIIAMVNSTQHQDPANASTEGPVMDLLSNQSRGIKDFSTRAAVYQWSTETQGIIFSSISYGIILTLIPSGYLAGIFGAKQILGAGLLISSLLTLFTPLAADFGVILVIVIRTVQGMAQGMAWTGQFTIWAKWAPPLERSKLTSIAGSGAAFGSFIILCVGGLISQALGWPFIFYIFGSIGCVCCVLWFTVIYDDPMHHPCISVREKEHITSSVAQQSSSPRRSVPIKAMVRCLPLWAIFMGFFSHFWLCTIIITYLPTYISTVLHVNIRDSGVLSSLPFIAASSCTILGGQMADFLLSRNLLSLITVRKLFSSLGLLLPSLCAVALPFVTSSYIATIVLLILIPGTSNLCDSGFIINTLDVAPRYASFLMGISRGFGLTAGIISSTTTGFLISQDSESGWRNVFFLSAAVNMFGLIFYLIFGQAEIQSWAKERTLTRL</sequence>
<feature type="chain" id="PRO_0000250387" description="Sodium-dependent phosphate transport protein 3">
    <location>
        <begin position="1"/>
        <end position="478"/>
    </location>
</feature>
<feature type="transmembrane region" description="Helical" evidence="1">
    <location>
        <begin position="98"/>
        <end position="118"/>
    </location>
</feature>
<feature type="transmembrane region" description="Helical" evidence="1">
    <location>
        <begin position="130"/>
        <end position="150"/>
    </location>
</feature>
<feature type="transmembrane region" description="Helical" evidence="1">
    <location>
        <begin position="183"/>
        <end position="203"/>
    </location>
</feature>
<feature type="transmembrane region" description="Helical" evidence="1">
    <location>
        <begin position="211"/>
        <end position="231"/>
    </location>
</feature>
<feature type="transmembrane region" description="Helical" evidence="1">
    <location>
        <begin position="273"/>
        <end position="293"/>
    </location>
</feature>
<feature type="transmembrane region" description="Helical" evidence="1">
    <location>
        <begin position="317"/>
        <end position="337"/>
    </location>
</feature>
<feature type="transmembrane region" description="Helical" evidence="1">
    <location>
        <begin position="341"/>
        <end position="361"/>
    </location>
</feature>
<feature type="transmembrane region" description="Helical" evidence="1">
    <location>
        <begin position="363"/>
        <end position="383"/>
    </location>
</feature>
<feature type="transmembrane region" description="Helical" evidence="1">
    <location>
        <begin position="405"/>
        <end position="425"/>
    </location>
</feature>
<feature type="transmembrane region" description="Helical" evidence="1">
    <location>
        <begin position="442"/>
        <end position="462"/>
    </location>
</feature>
<feature type="glycosylation site" description="N-linked (GlcNAc...) asparagine" evidence="1">
    <location>
        <position position="28"/>
    </location>
</feature>
<feature type="glycosylation site" description="N-linked (GlcNAc...) asparagine" evidence="1">
    <location>
        <position position="47"/>
    </location>
</feature>
<feature type="glycosylation site" description="N-linked (GlcNAc...) asparagine" evidence="1">
    <location>
        <position position="56"/>
    </location>
</feature>
<feature type="glycosylation site" description="N-linked (GlcNAc...) asparagine" evidence="1">
    <location>
        <position position="69"/>
    </location>
</feature>
<feature type="splice variant" id="VSP_020639" description="In isoform 2." evidence="3">
    <original>DSESGWRNVFFLSAAVNMFGLIFYLIFGQAEIQSWAKERTLTRL</original>
    <variation>VGHVIEHLQVAGF</variation>
    <location>
        <begin position="435"/>
        <end position="478"/>
    </location>
</feature>
<evidence type="ECO:0000255" key="1"/>
<evidence type="ECO:0000269" key="2">
    <source>
    </source>
</evidence>
<evidence type="ECO:0000303" key="3">
    <source>
    </source>
</evidence>
<evidence type="ECO:0000305" key="4"/>
<reference key="1">
    <citation type="journal article" date="2009" name="PLoS Biol.">
        <title>Lineage-specific biology revealed by a finished genome assembly of the mouse.</title>
        <authorList>
            <person name="Church D.M."/>
            <person name="Goodstadt L."/>
            <person name="Hillier L.W."/>
            <person name="Zody M.C."/>
            <person name="Goldstein S."/>
            <person name="She X."/>
            <person name="Bult C.J."/>
            <person name="Agarwala R."/>
            <person name="Cherry J.L."/>
            <person name="DiCuccio M."/>
            <person name="Hlavina W."/>
            <person name="Kapustin Y."/>
            <person name="Meric P."/>
            <person name="Maglott D."/>
            <person name="Birtle Z."/>
            <person name="Marques A.C."/>
            <person name="Graves T."/>
            <person name="Zhou S."/>
            <person name="Teague B."/>
            <person name="Potamousis K."/>
            <person name="Churas C."/>
            <person name="Place M."/>
            <person name="Herschleb J."/>
            <person name="Runnheim R."/>
            <person name="Forrest D."/>
            <person name="Amos-Landgraf J."/>
            <person name="Schwartz D.C."/>
            <person name="Cheng Z."/>
            <person name="Lindblad-Toh K."/>
            <person name="Eichler E.E."/>
            <person name="Ponting C.P."/>
        </authorList>
    </citation>
    <scope>NUCLEOTIDE SEQUENCE [LARGE SCALE GENOMIC DNA]</scope>
    <source>
        <strain>C57BL/6J</strain>
    </source>
</reference>
<reference key="2">
    <citation type="journal article" date="2004" name="Genome Res.">
        <title>The status, quality, and expansion of the NIH full-length cDNA project: the Mammalian Gene Collection (MGC).</title>
        <authorList>
            <consortium name="The MGC Project Team"/>
        </authorList>
    </citation>
    <scope>NUCLEOTIDE SEQUENCE [LARGE SCALE MRNA] (ISOFORM 2)</scope>
    <source>
        <strain>FVB/N</strain>
        <tissue>Salivary gland</tissue>
    </source>
</reference>
<reference key="3">
    <citation type="journal article" date="2015" name="Am. J. Physiol.">
        <title>Wide expression of type I Na+-phosphate cotransporter 3 (NPT3/SLC17A2), a membrane potential-driven organic anion transporter.</title>
        <authorList>
            <person name="Togawa N."/>
            <person name="Juge N."/>
            <person name="Miyaji T."/>
            <person name="Hiasa M."/>
            <person name="Omote H."/>
            <person name="Moriyama Y."/>
        </authorList>
    </citation>
    <scope>FUNCTION</scope>
    <scope>TRANSPORTER ACTIVITY</scope>
    <scope>SUBCELLULAR LOCATION</scope>
    <scope>TISSUE SPECIFICITY</scope>
    <scope>BIOPHYSICOCHEMICAL PROPERTIES</scope>
</reference>
<proteinExistence type="evidence at protein level"/>
<organism>
    <name type="scientific">Mus musculus</name>
    <name type="common">Mouse</name>
    <dbReference type="NCBI Taxonomy" id="10090"/>
    <lineage>
        <taxon>Eukaryota</taxon>
        <taxon>Metazoa</taxon>
        <taxon>Chordata</taxon>
        <taxon>Craniata</taxon>
        <taxon>Vertebrata</taxon>
        <taxon>Euteleostomi</taxon>
        <taxon>Mammalia</taxon>
        <taxon>Eutheria</taxon>
        <taxon>Euarchontoglires</taxon>
        <taxon>Glires</taxon>
        <taxon>Rodentia</taxon>
        <taxon>Myomorpha</taxon>
        <taxon>Muroidea</taxon>
        <taxon>Muridae</taxon>
        <taxon>Murinae</taxon>
        <taxon>Mus</taxon>
        <taxon>Mus</taxon>
    </lineage>
</organism>
<dbReference type="EMBL" id="AL590388">
    <property type="status" value="NOT_ANNOTATED_CDS"/>
    <property type="molecule type" value="Genomic_DNA"/>
</dbReference>
<dbReference type="EMBL" id="BC018306">
    <property type="protein sequence ID" value="AAH18306.1"/>
    <property type="molecule type" value="mRNA"/>
</dbReference>
<dbReference type="CCDS" id="CCDS36620.1">
    <molecule id="Q5SZA1-2"/>
</dbReference>
<dbReference type="RefSeq" id="NP_001364042.1">
    <molecule id="Q5SZA1-1"/>
    <property type="nucleotide sequence ID" value="NM_001377113.1"/>
</dbReference>
<dbReference type="RefSeq" id="NP_659085.1">
    <molecule id="Q5SZA1-2"/>
    <property type="nucleotide sequence ID" value="NM_144836.3"/>
</dbReference>
<dbReference type="RefSeq" id="XP_006516711.1">
    <molecule id="Q5SZA1-1"/>
    <property type="nucleotide sequence ID" value="XM_006516648.4"/>
</dbReference>
<dbReference type="RefSeq" id="XP_006516715.1">
    <molecule id="Q5SZA1-2"/>
    <property type="nucleotide sequence ID" value="XM_006516652.3"/>
</dbReference>
<dbReference type="SMR" id="Q5SZA1"/>
<dbReference type="FunCoup" id="Q5SZA1">
    <property type="interactions" value="22"/>
</dbReference>
<dbReference type="STRING" id="10090.ENSMUSP00000006786"/>
<dbReference type="GlyCosmos" id="Q5SZA1">
    <property type="glycosylation" value="4 sites, No reported glycans"/>
</dbReference>
<dbReference type="GlyGen" id="Q5SZA1">
    <property type="glycosylation" value="4 sites"/>
</dbReference>
<dbReference type="iPTMnet" id="Q5SZA1"/>
<dbReference type="PhosphoSitePlus" id="Q5SZA1"/>
<dbReference type="SwissPalm" id="Q5SZA1"/>
<dbReference type="jPOST" id="Q5SZA1"/>
<dbReference type="PaxDb" id="10090-ENSMUSP00000006786"/>
<dbReference type="PeptideAtlas" id="Q5SZA1"/>
<dbReference type="ProteomicsDB" id="253097">
    <molecule id="Q5SZA1-1"/>
</dbReference>
<dbReference type="ProteomicsDB" id="253098">
    <molecule id="Q5SZA1-2"/>
</dbReference>
<dbReference type="Antibodypedia" id="25472">
    <property type="antibodies" value="88 antibodies from 23 providers"/>
</dbReference>
<dbReference type="DNASU" id="218103"/>
<dbReference type="Ensembl" id="ENSMUST00000006786.11">
    <molecule id="Q5SZA1-2"/>
    <property type="protein sequence ID" value="ENSMUSP00000006786.5"/>
    <property type="gene ID" value="ENSMUSG00000036110.15"/>
</dbReference>
<dbReference type="Ensembl" id="ENSMUST00000099697.3">
    <molecule id="Q5SZA1-1"/>
    <property type="protein sequence ID" value="ENSMUSP00000097288.3"/>
    <property type="gene ID" value="ENSMUSG00000036110.15"/>
</dbReference>
<dbReference type="GeneID" id="218103"/>
<dbReference type="KEGG" id="mmu:218103"/>
<dbReference type="UCSC" id="uc007pvb.1">
    <molecule id="Q5SZA1-2"/>
    <property type="organism name" value="mouse"/>
</dbReference>
<dbReference type="AGR" id="MGI:2443098"/>
<dbReference type="CTD" id="10246"/>
<dbReference type="MGI" id="MGI:2443098">
    <property type="gene designation" value="Slc17a2"/>
</dbReference>
<dbReference type="VEuPathDB" id="HostDB:ENSMUSG00000036110"/>
<dbReference type="eggNOG" id="KOG2532">
    <property type="taxonomic scope" value="Eukaryota"/>
</dbReference>
<dbReference type="GeneTree" id="ENSGT00940000161926"/>
<dbReference type="HOGENOM" id="CLU_001265_5_0_1"/>
<dbReference type="InParanoid" id="Q5SZA1"/>
<dbReference type="OMA" id="MRGTWAF"/>
<dbReference type="OrthoDB" id="2985014at2759"/>
<dbReference type="PhylomeDB" id="Q5SZA1"/>
<dbReference type="TreeFam" id="TF313535"/>
<dbReference type="BioGRID-ORCS" id="218103">
    <property type="hits" value="2 hits in 77 CRISPR screens"/>
</dbReference>
<dbReference type="ChiTaRS" id="Slc17a2">
    <property type="organism name" value="mouse"/>
</dbReference>
<dbReference type="PRO" id="PR:Q5SZA1"/>
<dbReference type="Proteomes" id="UP000000589">
    <property type="component" value="Chromosome 13"/>
</dbReference>
<dbReference type="RNAct" id="Q5SZA1">
    <property type="molecule type" value="protein"/>
</dbReference>
<dbReference type="Bgee" id="ENSMUSG00000036110">
    <property type="expression patterns" value="Expressed in left lobe of liver and 29 other cell types or tissues"/>
</dbReference>
<dbReference type="GO" id="GO:0016324">
    <property type="term" value="C:apical plasma membrane"/>
    <property type="evidence" value="ECO:0000314"/>
    <property type="project" value="UniProtKB"/>
</dbReference>
<dbReference type="GO" id="GO:0015293">
    <property type="term" value="F:symporter activity"/>
    <property type="evidence" value="ECO:0007669"/>
    <property type="project" value="UniProtKB-KW"/>
</dbReference>
<dbReference type="GO" id="GO:0015143">
    <property type="term" value="F:urate transmembrane transporter activity"/>
    <property type="evidence" value="ECO:0000314"/>
    <property type="project" value="UniProtKB"/>
</dbReference>
<dbReference type="GO" id="GO:0006814">
    <property type="term" value="P:sodium ion transport"/>
    <property type="evidence" value="ECO:0007669"/>
    <property type="project" value="UniProtKB-KW"/>
</dbReference>
<dbReference type="CDD" id="cd17318">
    <property type="entry name" value="MFS_SLC17"/>
    <property type="match status" value="1"/>
</dbReference>
<dbReference type="FunFam" id="1.20.1250.20:FF:000003">
    <property type="entry name" value="Solute carrier family 17 member 3"/>
    <property type="match status" value="1"/>
</dbReference>
<dbReference type="FunFam" id="1.20.1250.20:FF:000060">
    <property type="entry name" value="Solute carrier family 17 member 3"/>
    <property type="match status" value="1"/>
</dbReference>
<dbReference type="Gene3D" id="1.20.1250.20">
    <property type="entry name" value="MFS general substrate transporter like domains"/>
    <property type="match status" value="2"/>
</dbReference>
<dbReference type="InterPro" id="IPR011701">
    <property type="entry name" value="MFS"/>
</dbReference>
<dbReference type="InterPro" id="IPR020846">
    <property type="entry name" value="MFS_dom"/>
</dbReference>
<dbReference type="InterPro" id="IPR050382">
    <property type="entry name" value="MFS_Na/Anion_cotransporter"/>
</dbReference>
<dbReference type="InterPro" id="IPR036259">
    <property type="entry name" value="MFS_trans_sf"/>
</dbReference>
<dbReference type="PANTHER" id="PTHR11662:SF193">
    <property type="entry name" value="SODIUM-DEPENDENT PHOSPHATE TRANSPORT PROTEIN 3"/>
    <property type="match status" value="1"/>
</dbReference>
<dbReference type="PANTHER" id="PTHR11662">
    <property type="entry name" value="SOLUTE CARRIER FAMILY 17"/>
    <property type="match status" value="1"/>
</dbReference>
<dbReference type="Pfam" id="PF07690">
    <property type="entry name" value="MFS_1"/>
    <property type="match status" value="1"/>
</dbReference>
<dbReference type="SUPFAM" id="SSF103473">
    <property type="entry name" value="MFS general substrate transporter"/>
    <property type="match status" value="1"/>
</dbReference>
<dbReference type="PROSITE" id="PS50850">
    <property type="entry name" value="MFS"/>
    <property type="match status" value="1"/>
</dbReference>
<keyword id="KW-0025">Alternative splicing</keyword>
<keyword id="KW-1003">Cell membrane</keyword>
<keyword id="KW-0325">Glycoprotein</keyword>
<keyword id="KW-0406">Ion transport</keyword>
<keyword id="KW-0472">Membrane</keyword>
<keyword id="KW-1185">Reference proteome</keyword>
<keyword id="KW-0915">Sodium</keyword>
<keyword id="KW-0739">Sodium transport</keyword>
<keyword id="KW-0769">Symport</keyword>
<keyword id="KW-0812">Transmembrane</keyword>
<keyword id="KW-1133">Transmembrane helix</keyword>
<keyword id="KW-0813">Transport</keyword>
<name>NPT3_MOUSE</name>